<organism>
    <name type="scientific">Caenorhabditis elegans</name>
    <dbReference type="NCBI Taxonomy" id="6239"/>
    <lineage>
        <taxon>Eukaryota</taxon>
        <taxon>Metazoa</taxon>
        <taxon>Ecdysozoa</taxon>
        <taxon>Nematoda</taxon>
        <taxon>Chromadorea</taxon>
        <taxon>Rhabditida</taxon>
        <taxon>Rhabditina</taxon>
        <taxon>Rhabditomorpha</taxon>
        <taxon>Rhabditoidea</taxon>
        <taxon>Rhabditidae</taxon>
        <taxon>Peloderinae</taxon>
        <taxon>Caenorhabditis</taxon>
    </lineage>
</organism>
<feature type="signal peptide" evidence="2">
    <location>
        <begin position="1"/>
        <end position="31"/>
    </location>
</feature>
<feature type="propeptide" id="PRO_0000442660" evidence="5">
    <location>
        <begin position="32"/>
        <end status="unknown"/>
    </location>
</feature>
<feature type="chain" id="PRO_0000028917" description="Zinc metalloproteinase nas-13">
    <location>
        <begin status="unknown"/>
        <end position="450"/>
    </location>
</feature>
<feature type="domain" description="Peptidase M12A" evidence="4">
    <location>
        <begin position="110"/>
        <end position="303"/>
    </location>
</feature>
<feature type="domain" description="ShKT 1" evidence="3">
    <location>
        <begin position="368"/>
        <end position="404"/>
    </location>
</feature>
<feature type="domain" description="ShKT 2" evidence="3">
    <location>
        <begin position="414"/>
        <end position="450"/>
    </location>
</feature>
<feature type="short sequence motif" description="Cell attachment site" evidence="2">
    <location>
        <begin position="349"/>
        <end position="351"/>
    </location>
</feature>
<feature type="active site" evidence="4">
    <location>
        <position position="202"/>
    </location>
</feature>
<feature type="binding site" evidence="4">
    <location>
        <position position="201"/>
    </location>
    <ligand>
        <name>Zn(2+)</name>
        <dbReference type="ChEBI" id="CHEBI:29105"/>
        <note>catalytic</note>
    </ligand>
</feature>
<feature type="binding site" evidence="4">
    <location>
        <position position="205"/>
    </location>
    <ligand>
        <name>Zn(2+)</name>
        <dbReference type="ChEBI" id="CHEBI:29105"/>
        <note>catalytic</note>
    </ligand>
</feature>
<feature type="binding site" evidence="4">
    <location>
        <position position="211"/>
    </location>
    <ligand>
        <name>Zn(2+)</name>
        <dbReference type="ChEBI" id="CHEBI:29105"/>
        <note>catalytic</note>
    </ligand>
</feature>
<feature type="glycosylation site" description="N-linked (GlcNAc...) asparagine" evidence="2">
    <location>
        <position position="68"/>
    </location>
</feature>
<feature type="glycosylation site" description="N-linked (GlcNAc...) asparagine" evidence="2">
    <location>
        <position position="225"/>
    </location>
</feature>
<feature type="glycosylation site" description="N-linked (GlcNAc...) asparagine" evidence="2">
    <location>
        <position position="431"/>
    </location>
</feature>
<feature type="disulfide bond" evidence="4">
    <location>
        <begin position="152"/>
        <end position="302"/>
    </location>
</feature>
<feature type="disulfide bond" evidence="4">
    <location>
        <begin position="174"/>
        <end position="193"/>
    </location>
</feature>
<feature type="disulfide bond" evidence="3">
    <location>
        <begin position="368"/>
        <end position="404"/>
    </location>
</feature>
<feature type="disulfide bond" evidence="3">
    <location>
        <begin position="375"/>
        <end position="397"/>
    </location>
</feature>
<feature type="disulfide bond" evidence="3">
    <location>
        <begin position="384"/>
        <end position="401"/>
    </location>
</feature>
<feature type="disulfide bond" evidence="3">
    <location>
        <begin position="414"/>
        <end position="450"/>
    </location>
</feature>
<feature type="disulfide bond" evidence="3">
    <location>
        <begin position="421"/>
        <end position="443"/>
    </location>
</feature>
<feature type="disulfide bond" evidence="3">
    <location>
        <begin position="430"/>
        <end position="447"/>
    </location>
</feature>
<comment type="function">
    <text evidence="1">Metalloprotease.</text>
</comment>
<comment type="cofactor">
    <cofactor evidence="4">
        <name>Zn(2+)</name>
        <dbReference type="ChEBI" id="CHEBI:29105"/>
    </cofactor>
    <text evidence="4">Binds 1 zinc ion per subunit.</text>
</comment>
<comment type="subcellular location">
    <subcellularLocation>
        <location evidence="5">Secreted</location>
    </subcellularLocation>
</comment>
<comment type="sequence caution" evidence="5">
    <conflict type="miscellaneous discrepancy">
        <sequence resource="EMBL-CDS" id="CAD99208"/>
    </conflict>
    <text>Deletion of several nucleotides that changes the frame.</text>
</comment>
<sequence length="450" mass="50760">MPSPTSSSASVFSSHLFFVFCIFSQIAQSYAQFNRFFDPSIPEQETVLTDYDYNMIGHFRENDQWFVNDSAMYNPLRFEGDIANSGLNSRSINTFFGDSPLFGIFGVQRNAVRQTYLKWEQARIPYTISSQYSSYSRSKIAEAIEEYRKKTCIDFSPKSAGDLDYIHIVPDDGCYSLVGRIGGKQPVSLGDGCIQKGIIIHELMHAVGFFHEQSRADRDEYVKINWSNVEAGLQDQFDKYSLNMIDHLGTKYDYGSVMHYAPTAFSKNGKPTIEPIEKNVEIGQRAGFSENDIYKINMLYNCPTFTATTLAPENTKRVKSITKKVTSATGSPLSKKGEIGSSIGDKGDRGDNSVLSSLISIHSGLGKCEDRRKDCEFLARAGHCESRFSIRFMTENCANSCGKCIAEEKRKEVCEDARTWCERWANSGMCNQTVFKDYMRQKCAKSCNFC</sequence>
<dbReference type="EC" id="3.4.24.-" evidence="1"/>
<dbReference type="EMBL" id="Z69791">
    <property type="protein sequence ID" value="CAA93663.4"/>
    <property type="molecule type" value="Genomic_DNA"/>
</dbReference>
<dbReference type="EMBL" id="Z69793">
    <property type="protein sequence ID" value="CAA93663.4"/>
    <property type="status" value="JOINED"/>
    <property type="molecule type" value="Genomic_DNA"/>
</dbReference>
<dbReference type="EMBL" id="AJ561206">
    <property type="protein sequence ID" value="CAD99208.1"/>
    <property type="status" value="ALT_SEQ"/>
    <property type="molecule type" value="mRNA"/>
</dbReference>
<dbReference type="PIR" id="T23864">
    <property type="entry name" value="T23864"/>
</dbReference>
<dbReference type="RefSeq" id="NP_510549.3">
    <property type="nucleotide sequence ID" value="NM_078148.6"/>
</dbReference>
<dbReference type="SMR" id="Q20191"/>
<dbReference type="FunCoup" id="Q20191">
    <property type="interactions" value="2"/>
</dbReference>
<dbReference type="STRING" id="6239.F39D8.4.1"/>
<dbReference type="MEROPS" id="M12.A38"/>
<dbReference type="GlyCosmos" id="Q20191">
    <property type="glycosylation" value="3 sites, No reported glycans"/>
</dbReference>
<dbReference type="PaxDb" id="6239-F39D8.4"/>
<dbReference type="PeptideAtlas" id="Q20191"/>
<dbReference type="EnsemblMetazoa" id="F39D8.4.1">
    <property type="protein sequence ID" value="F39D8.4.1"/>
    <property type="gene ID" value="WBGene00003532"/>
</dbReference>
<dbReference type="GeneID" id="185492"/>
<dbReference type="KEGG" id="cel:CELE_F39D8.4"/>
<dbReference type="UCSC" id="F39D8.4">
    <property type="organism name" value="c. elegans"/>
</dbReference>
<dbReference type="AGR" id="WB:WBGene00003532"/>
<dbReference type="CTD" id="185492"/>
<dbReference type="WormBase" id="F39D8.4">
    <property type="protein sequence ID" value="CE43112"/>
    <property type="gene ID" value="WBGene00003532"/>
    <property type="gene designation" value="nas-13"/>
</dbReference>
<dbReference type="eggNOG" id="KOG3714">
    <property type="taxonomic scope" value="Eukaryota"/>
</dbReference>
<dbReference type="GeneTree" id="ENSGT00940000171035"/>
<dbReference type="HOGENOM" id="CLU_017286_0_1_1"/>
<dbReference type="InParanoid" id="Q20191"/>
<dbReference type="OMA" id="VNDSAMY"/>
<dbReference type="OrthoDB" id="291007at2759"/>
<dbReference type="PhylomeDB" id="Q20191"/>
<dbReference type="PRO" id="PR:Q20191"/>
<dbReference type="Proteomes" id="UP000001940">
    <property type="component" value="Chromosome X"/>
</dbReference>
<dbReference type="Bgee" id="WBGene00003532">
    <property type="expression patterns" value="Expressed in pharyngeal muscle cell (C elegans) and 2 other cell types or tissues"/>
</dbReference>
<dbReference type="GO" id="GO:0005576">
    <property type="term" value="C:extracellular region"/>
    <property type="evidence" value="ECO:0007669"/>
    <property type="project" value="UniProtKB-SubCell"/>
</dbReference>
<dbReference type="GO" id="GO:0004222">
    <property type="term" value="F:metalloendopeptidase activity"/>
    <property type="evidence" value="ECO:0000318"/>
    <property type="project" value="GO_Central"/>
</dbReference>
<dbReference type="GO" id="GO:0008270">
    <property type="term" value="F:zinc ion binding"/>
    <property type="evidence" value="ECO:0007669"/>
    <property type="project" value="InterPro"/>
</dbReference>
<dbReference type="GO" id="GO:0006508">
    <property type="term" value="P:proteolysis"/>
    <property type="evidence" value="ECO:0007669"/>
    <property type="project" value="UniProtKB-KW"/>
</dbReference>
<dbReference type="CDD" id="cd04280">
    <property type="entry name" value="ZnMc_astacin_like"/>
    <property type="match status" value="1"/>
</dbReference>
<dbReference type="FunFam" id="3.40.390.10:FF:000015">
    <property type="entry name" value="Meprin A subunit"/>
    <property type="match status" value="1"/>
</dbReference>
<dbReference type="FunFam" id="1.10.10.1940:FF:000003">
    <property type="entry name" value="Metalloendopeptidase"/>
    <property type="match status" value="1"/>
</dbReference>
<dbReference type="FunFam" id="1.10.10.1940:FF:000004">
    <property type="entry name" value="Metalloendopeptidase"/>
    <property type="match status" value="1"/>
</dbReference>
<dbReference type="Gene3D" id="1.10.10.1940">
    <property type="match status" value="2"/>
</dbReference>
<dbReference type="Gene3D" id="3.40.390.10">
    <property type="entry name" value="Collagenase (Catalytic Domain)"/>
    <property type="match status" value="1"/>
</dbReference>
<dbReference type="InterPro" id="IPR034035">
    <property type="entry name" value="Astacin-like_dom"/>
</dbReference>
<dbReference type="InterPro" id="IPR024079">
    <property type="entry name" value="MetalloPept_cat_dom_sf"/>
</dbReference>
<dbReference type="InterPro" id="IPR001506">
    <property type="entry name" value="Peptidase_M12A"/>
</dbReference>
<dbReference type="InterPro" id="IPR006026">
    <property type="entry name" value="Peptidase_Metallo"/>
</dbReference>
<dbReference type="InterPro" id="IPR003582">
    <property type="entry name" value="ShKT_dom"/>
</dbReference>
<dbReference type="PANTHER" id="PTHR10127">
    <property type="entry name" value="DISCOIDIN, CUB, EGF, LAMININ , AND ZINC METALLOPROTEASE DOMAIN CONTAINING"/>
    <property type="match status" value="1"/>
</dbReference>
<dbReference type="PANTHER" id="PTHR10127:SF890">
    <property type="entry name" value="ZINC METALLOPROTEINASE NAS-13"/>
    <property type="match status" value="1"/>
</dbReference>
<dbReference type="Pfam" id="PF01400">
    <property type="entry name" value="Astacin"/>
    <property type="match status" value="1"/>
</dbReference>
<dbReference type="Pfam" id="PF01549">
    <property type="entry name" value="ShK"/>
    <property type="match status" value="2"/>
</dbReference>
<dbReference type="PRINTS" id="PR00480">
    <property type="entry name" value="ASTACIN"/>
</dbReference>
<dbReference type="SMART" id="SM00254">
    <property type="entry name" value="ShKT"/>
    <property type="match status" value="2"/>
</dbReference>
<dbReference type="SMART" id="SM00235">
    <property type="entry name" value="ZnMc"/>
    <property type="match status" value="1"/>
</dbReference>
<dbReference type="SUPFAM" id="SSF55486">
    <property type="entry name" value="Metalloproteases ('zincins'), catalytic domain"/>
    <property type="match status" value="1"/>
</dbReference>
<dbReference type="PROSITE" id="PS51864">
    <property type="entry name" value="ASTACIN"/>
    <property type="match status" value="1"/>
</dbReference>
<dbReference type="PROSITE" id="PS51670">
    <property type="entry name" value="SHKT"/>
    <property type="match status" value="2"/>
</dbReference>
<dbReference type="PROSITE" id="PS00142">
    <property type="entry name" value="ZINC_PROTEASE"/>
    <property type="match status" value="1"/>
</dbReference>
<proteinExistence type="evidence at transcript level"/>
<reference key="1">
    <citation type="journal article" date="1998" name="Science">
        <title>Genome sequence of the nematode C. elegans: a platform for investigating biology.</title>
        <authorList>
            <consortium name="The C. elegans sequencing consortium"/>
        </authorList>
    </citation>
    <scope>NUCLEOTIDE SEQUENCE [LARGE SCALE GENOMIC DNA]</scope>
    <source>
        <strain>Bristol N2</strain>
    </source>
</reference>
<reference key="2">
    <citation type="journal article" date="2003" name="Eur. J. Biochem.">
        <title>The astacin protein family in Caenorhabditis elegans.</title>
        <authorList>
            <person name="Moehrlen F."/>
            <person name="Hutter H."/>
            <person name="Zwilling R."/>
        </authorList>
    </citation>
    <scope>NUCLEOTIDE SEQUENCE [MRNA] OF 36-71</scope>
    <scope>NOMENCLATURE</scope>
    <source>
        <strain>Bristol N2</strain>
    </source>
</reference>
<name>NAS13_CAEEL</name>
<evidence type="ECO:0000250" key="1">
    <source>
        <dbReference type="UniProtKB" id="A8Q2D1"/>
    </source>
</evidence>
<evidence type="ECO:0000255" key="2"/>
<evidence type="ECO:0000255" key="3">
    <source>
        <dbReference type="PROSITE-ProRule" id="PRU01005"/>
    </source>
</evidence>
<evidence type="ECO:0000255" key="4">
    <source>
        <dbReference type="PROSITE-ProRule" id="PRU01211"/>
    </source>
</evidence>
<evidence type="ECO:0000305" key="5"/>
<keyword id="KW-1015">Disulfide bond</keyword>
<keyword id="KW-0325">Glycoprotein</keyword>
<keyword id="KW-0378">Hydrolase</keyword>
<keyword id="KW-0479">Metal-binding</keyword>
<keyword id="KW-0482">Metalloprotease</keyword>
<keyword id="KW-0645">Protease</keyword>
<keyword id="KW-1185">Reference proteome</keyword>
<keyword id="KW-0677">Repeat</keyword>
<keyword id="KW-0964">Secreted</keyword>
<keyword id="KW-0732">Signal</keyword>
<keyword id="KW-0862">Zinc</keyword>
<keyword id="KW-0865">Zymogen</keyword>
<protein>
    <recommendedName>
        <fullName>Zinc metalloproteinase nas-13</fullName>
        <ecNumber evidence="1">3.4.24.-</ecNumber>
    </recommendedName>
    <alternativeName>
        <fullName>Nematode astacin 13</fullName>
    </alternativeName>
</protein>
<gene>
    <name type="primary">nas-13</name>
    <name type="ORF">F39D8.4</name>
</gene>
<accession>Q20191</accession>
<accession>Q21661</accession>
<accession>Q7Z0N3</accession>